<name>AROA_SALNS</name>
<feature type="chain" id="PRO_1000099749" description="3-phosphoshikimate 1-carboxyvinyltransferase">
    <location>
        <begin position="1"/>
        <end position="427"/>
    </location>
</feature>
<feature type="active site" description="Proton acceptor" evidence="1">
    <location>
        <position position="313"/>
    </location>
</feature>
<feature type="binding site" evidence="1">
    <location>
        <position position="22"/>
    </location>
    <ligand>
        <name>3-phosphoshikimate</name>
        <dbReference type="ChEBI" id="CHEBI:145989"/>
    </ligand>
</feature>
<feature type="binding site" evidence="1">
    <location>
        <position position="22"/>
    </location>
    <ligand>
        <name>phosphoenolpyruvate</name>
        <dbReference type="ChEBI" id="CHEBI:58702"/>
    </ligand>
</feature>
<feature type="binding site" evidence="1">
    <location>
        <position position="23"/>
    </location>
    <ligand>
        <name>3-phosphoshikimate</name>
        <dbReference type="ChEBI" id="CHEBI:145989"/>
    </ligand>
</feature>
<feature type="binding site" evidence="1">
    <location>
        <position position="27"/>
    </location>
    <ligand>
        <name>3-phosphoshikimate</name>
        <dbReference type="ChEBI" id="CHEBI:145989"/>
    </ligand>
</feature>
<feature type="binding site" evidence="1">
    <location>
        <position position="96"/>
    </location>
    <ligand>
        <name>phosphoenolpyruvate</name>
        <dbReference type="ChEBI" id="CHEBI:58702"/>
    </ligand>
</feature>
<feature type="binding site" evidence="1">
    <location>
        <position position="124"/>
    </location>
    <ligand>
        <name>phosphoenolpyruvate</name>
        <dbReference type="ChEBI" id="CHEBI:58702"/>
    </ligand>
</feature>
<feature type="binding site" evidence="1">
    <location>
        <position position="169"/>
    </location>
    <ligand>
        <name>3-phosphoshikimate</name>
        <dbReference type="ChEBI" id="CHEBI:145989"/>
    </ligand>
</feature>
<feature type="binding site" evidence="1">
    <location>
        <position position="170"/>
    </location>
    <ligand>
        <name>3-phosphoshikimate</name>
        <dbReference type="ChEBI" id="CHEBI:145989"/>
    </ligand>
</feature>
<feature type="binding site" evidence="1">
    <location>
        <position position="171"/>
    </location>
    <ligand>
        <name>3-phosphoshikimate</name>
        <dbReference type="ChEBI" id="CHEBI:145989"/>
    </ligand>
</feature>
<feature type="binding site" evidence="1">
    <location>
        <position position="171"/>
    </location>
    <ligand>
        <name>phosphoenolpyruvate</name>
        <dbReference type="ChEBI" id="CHEBI:58702"/>
    </ligand>
</feature>
<feature type="binding site" evidence="1">
    <location>
        <position position="197"/>
    </location>
    <ligand>
        <name>3-phosphoshikimate</name>
        <dbReference type="ChEBI" id="CHEBI:145989"/>
    </ligand>
</feature>
<feature type="binding site" evidence="1">
    <location>
        <position position="313"/>
    </location>
    <ligand>
        <name>3-phosphoshikimate</name>
        <dbReference type="ChEBI" id="CHEBI:145989"/>
    </ligand>
</feature>
<feature type="binding site" evidence="1">
    <location>
        <position position="336"/>
    </location>
    <ligand>
        <name>3-phosphoshikimate</name>
        <dbReference type="ChEBI" id="CHEBI:145989"/>
    </ligand>
</feature>
<feature type="binding site" evidence="1">
    <location>
        <position position="340"/>
    </location>
    <ligand>
        <name>3-phosphoshikimate</name>
        <dbReference type="ChEBI" id="CHEBI:145989"/>
    </ligand>
</feature>
<feature type="binding site" evidence="1">
    <location>
        <position position="344"/>
    </location>
    <ligand>
        <name>phosphoenolpyruvate</name>
        <dbReference type="ChEBI" id="CHEBI:58702"/>
    </ligand>
</feature>
<feature type="binding site" evidence="1">
    <location>
        <position position="386"/>
    </location>
    <ligand>
        <name>phosphoenolpyruvate</name>
        <dbReference type="ChEBI" id="CHEBI:58702"/>
    </ligand>
</feature>
<feature type="binding site" evidence="1">
    <location>
        <position position="411"/>
    </location>
    <ligand>
        <name>phosphoenolpyruvate</name>
        <dbReference type="ChEBI" id="CHEBI:58702"/>
    </ligand>
</feature>
<dbReference type="EC" id="2.5.1.19" evidence="1"/>
<dbReference type="EMBL" id="CP001113">
    <property type="protein sequence ID" value="ACF65036.1"/>
    <property type="molecule type" value="Genomic_DNA"/>
</dbReference>
<dbReference type="RefSeq" id="WP_000445186.1">
    <property type="nucleotide sequence ID" value="NZ_CCMR01000003.1"/>
</dbReference>
<dbReference type="SMR" id="B4T142"/>
<dbReference type="KEGG" id="see:SNSL254_A1011"/>
<dbReference type="HOGENOM" id="CLU_024321_0_0_6"/>
<dbReference type="UniPathway" id="UPA00053">
    <property type="reaction ID" value="UER00089"/>
</dbReference>
<dbReference type="Proteomes" id="UP000008824">
    <property type="component" value="Chromosome"/>
</dbReference>
<dbReference type="GO" id="GO:0005737">
    <property type="term" value="C:cytoplasm"/>
    <property type="evidence" value="ECO:0007669"/>
    <property type="project" value="UniProtKB-SubCell"/>
</dbReference>
<dbReference type="GO" id="GO:0003866">
    <property type="term" value="F:3-phosphoshikimate 1-carboxyvinyltransferase activity"/>
    <property type="evidence" value="ECO:0007669"/>
    <property type="project" value="UniProtKB-UniRule"/>
</dbReference>
<dbReference type="GO" id="GO:0008652">
    <property type="term" value="P:amino acid biosynthetic process"/>
    <property type="evidence" value="ECO:0007669"/>
    <property type="project" value="UniProtKB-KW"/>
</dbReference>
<dbReference type="GO" id="GO:0009073">
    <property type="term" value="P:aromatic amino acid family biosynthetic process"/>
    <property type="evidence" value="ECO:0007669"/>
    <property type="project" value="UniProtKB-KW"/>
</dbReference>
<dbReference type="GO" id="GO:0009423">
    <property type="term" value="P:chorismate biosynthetic process"/>
    <property type="evidence" value="ECO:0007669"/>
    <property type="project" value="UniProtKB-UniRule"/>
</dbReference>
<dbReference type="FunFam" id="3.65.10.10:FF:000003">
    <property type="entry name" value="3-phosphoshikimate 1-carboxyvinyltransferase"/>
    <property type="match status" value="1"/>
</dbReference>
<dbReference type="FunFam" id="3.65.10.10:FF:000004">
    <property type="entry name" value="3-phosphoshikimate 1-carboxyvinyltransferase"/>
    <property type="match status" value="1"/>
</dbReference>
<dbReference type="Gene3D" id="3.65.10.10">
    <property type="entry name" value="Enolpyruvate transferase domain"/>
    <property type="match status" value="2"/>
</dbReference>
<dbReference type="HAMAP" id="MF_00210">
    <property type="entry name" value="EPSP_synth"/>
    <property type="match status" value="1"/>
</dbReference>
<dbReference type="InterPro" id="IPR001986">
    <property type="entry name" value="Enolpyruvate_Tfrase_dom"/>
</dbReference>
<dbReference type="InterPro" id="IPR036968">
    <property type="entry name" value="Enolpyruvate_Tfrase_sf"/>
</dbReference>
<dbReference type="InterPro" id="IPR006264">
    <property type="entry name" value="EPSP_synthase"/>
</dbReference>
<dbReference type="InterPro" id="IPR023193">
    <property type="entry name" value="EPSP_synthase_CS"/>
</dbReference>
<dbReference type="InterPro" id="IPR013792">
    <property type="entry name" value="RNA3'P_cycl/enolpyr_Trfase_a/b"/>
</dbReference>
<dbReference type="NCBIfam" id="TIGR01356">
    <property type="entry name" value="aroA"/>
    <property type="match status" value="1"/>
</dbReference>
<dbReference type="PANTHER" id="PTHR21090">
    <property type="entry name" value="AROM/DEHYDROQUINATE SYNTHASE"/>
    <property type="match status" value="1"/>
</dbReference>
<dbReference type="PANTHER" id="PTHR21090:SF5">
    <property type="entry name" value="PENTAFUNCTIONAL AROM POLYPEPTIDE"/>
    <property type="match status" value="1"/>
</dbReference>
<dbReference type="Pfam" id="PF00275">
    <property type="entry name" value="EPSP_synthase"/>
    <property type="match status" value="1"/>
</dbReference>
<dbReference type="PIRSF" id="PIRSF000505">
    <property type="entry name" value="EPSPS"/>
    <property type="match status" value="1"/>
</dbReference>
<dbReference type="SUPFAM" id="SSF55205">
    <property type="entry name" value="EPT/RTPC-like"/>
    <property type="match status" value="1"/>
</dbReference>
<dbReference type="PROSITE" id="PS00104">
    <property type="entry name" value="EPSP_SYNTHASE_1"/>
    <property type="match status" value="1"/>
</dbReference>
<dbReference type="PROSITE" id="PS00885">
    <property type="entry name" value="EPSP_SYNTHASE_2"/>
    <property type="match status" value="1"/>
</dbReference>
<sequence>MESLTLQPIARVDGAINLPGSKSVSNRALLLAALACGKTVLTNLLDSDDVRHMLNALSALGINYTLSADRTRCDITGNGGALRAPGALELFLGNAGTAMRPLAAALCLGQNEIVLTGEPRMKERPIGHLVDSLRQGGANIDYLEQENYPPLRLRGGFTGGDIEVDGSVSSQFLTALLMTAPLAPEDTIIRVKGELVSKPYIDITLNLMKTFGVEIANHHYQQFVVKGGQQYHSPGRYLVEGDASSASYFLAAGAIKGGTVKVTGIGRKSMQGDIRFADVLEKMGATITWGDDFIACTRGELHAIDMDMNHIPDAAMTIATTALFAKGTTTLRNIYNWRVKETDRLFAMATELRKVGAEVEEGHDYIRITPPAKLQHADIGTYNDHRMAMCFSLVALSDTPVTILDPKCTAKTFPDYFEQLARMSTPA</sequence>
<reference key="1">
    <citation type="journal article" date="2011" name="J. Bacteriol.">
        <title>Comparative genomics of 28 Salmonella enterica isolates: evidence for CRISPR-mediated adaptive sublineage evolution.</title>
        <authorList>
            <person name="Fricke W.F."/>
            <person name="Mammel M.K."/>
            <person name="McDermott P.F."/>
            <person name="Tartera C."/>
            <person name="White D.G."/>
            <person name="Leclerc J.E."/>
            <person name="Ravel J."/>
            <person name="Cebula T.A."/>
        </authorList>
    </citation>
    <scope>NUCLEOTIDE SEQUENCE [LARGE SCALE GENOMIC DNA]</scope>
    <source>
        <strain>SL254</strain>
    </source>
</reference>
<proteinExistence type="inferred from homology"/>
<comment type="function">
    <text evidence="1">Catalyzes the transfer of the enolpyruvyl moiety of phosphoenolpyruvate (PEP) to the 5-hydroxyl of shikimate-3-phosphate (S3P) to produce enolpyruvyl shikimate-3-phosphate and inorganic phosphate.</text>
</comment>
<comment type="catalytic activity">
    <reaction evidence="1">
        <text>3-phosphoshikimate + phosphoenolpyruvate = 5-O-(1-carboxyvinyl)-3-phosphoshikimate + phosphate</text>
        <dbReference type="Rhea" id="RHEA:21256"/>
        <dbReference type="ChEBI" id="CHEBI:43474"/>
        <dbReference type="ChEBI" id="CHEBI:57701"/>
        <dbReference type="ChEBI" id="CHEBI:58702"/>
        <dbReference type="ChEBI" id="CHEBI:145989"/>
        <dbReference type="EC" id="2.5.1.19"/>
    </reaction>
    <physiologicalReaction direction="left-to-right" evidence="1">
        <dbReference type="Rhea" id="RHEA:21257"/>
    </physiologicalReaction>
</comment>
<comment type="pathway">
    <text evidence="1">Metabolic intermediate biosynthesis; chorismate biosynthesis; chorismate from D-erythrose 4-phosphate and phosphoenolpyruvate: step 6/7.</text>
</comment>
<comment type="subunit">
    <text evidence="1">Monomer.</text>
</comment>
<comment type="subcellular location">
    <subcellularLocation>
        <location evidence="1">Cytoplasm</location>
    </subcellularLocation>
</comment>
<comment type="similarity">
    <text evidence="1">Belongs to the EPSP synthase family.</text>
</comment>
<keyword id="KW-0028">Amino-acid biosynthesis</keyword>
<keyword id="KW-0057">Aromatic amino acid biosynthesis</keyword>
<keyword id="KW-0963">Cytoplasm</keyword>
<keyword id="KW-0808">Transferase</keyword>
<organism>
    <name type="scientific">Salmonella newport (strain SL254)</name>
    <dbReference type="NCBI Taxonomy" id="423368"/>
    <lineage>
        <taxon>Bacteria</taxon>
        <taxon>Pseudomonadati</taxon>
        <taxon>Pseudomonadota</taxon>
        <taxon>Gammaproteobacteria</taxon>
        <taxon>Enterobacterales</taxon>
        <taxon>Enterobacteriaceae</taxon>
        <taxon>Salmonella</taxon>
    </lineage>
</organism>
<evidence type="ECO:0000255" key="1">
    <source>
        <dbReference type="HAMAP-Rule" id="MF_00210"/>
    </source>
</evidence>
<gene>
    <name evidence="1" type="primary">aroA</name>
    <name type="ordered locus">SNSL254_A1011</name>
</gene>
<accession>B4T142</accession>
<protein>
    <recommendedName>
        <fullName evidence="1">3-phosphoshikimate 1-carboxyvinyltransferase</fullName>
        <ecNumber evidence="1">2.5.1.19</ecNumber>
    </recommendedName>
    <alternativeName>
        <fullName evidence="1">5-enolpyruvylshikimate-3-phosphate synthase</fullName>
        <shortName evidence="1">EPSP synthase</shortName>
        <shortName evidence="1">EPSPS</shortName>
    </alternativeName>
</protein>